<gene>
    <name type="ordered locus">YCR022C</name>
    <name type="ORF">YCR22C</name>
</gene>
<reference key="1">
    <citation type="journal article" date="1992" name="Nature">
        <title>The complete DNA sequence of yeast chromosome III.</title>
        <authorList>
            <person name="Oliver S.G."/>
            <person name="van der Aart Q.J.M."/>
            <person name="Agostoni-Carbone M.L."/>
            <person name="Aigle M."/>
            <person name="Alberghina L."/>
            <person name="Alexandraki D."/>
            <person name="Antoine G."/>
            <person name="Anwar R."/>
            <person name="Ballesta J.P.G."/>
            <person name="Benit P."/>
            <person name="Berben G."/>
            <person name="Bergantino E."/>
            <person name="Biteau N."/>
            <person name="Bolle P.-A."/>
            <person name="Bolotin-Fukuhara M."/>
            <person name="Brown A."/>
            <person name="Brown A.J.P."/>
            <person name="Buhler J.-M."/>
            <person name="Carcano C."/>
            <person name="Carignani G."/>
            <person name="Cederberg H."/>
            <person name="Chanet R."/>
            <person name="Contreras R."/>
            <person name="Crouzet M."/>
            <person name="Daignan-Fornier B."/>
            <person name="Defoor E."/>
            <person name="Delgado M.D."/>
            <person name="Demolder J."/>
            <person name="Doira C."/>
            <person name="Dubois E."/>
            <person name="Dujon B."/>
            <person name="Duesterhoeft A."/>
            <person name="Erdmann D."/>
            <person name="Esteban M."/>
            <person name="Fabre F."/>
            <person name="Fairhead C."/>
            <person name="Faye G."/>
            <person name="Feldmann H."/>
            <person name="Fiers W."/>
            <person name="Francingues-Gaillard M.-C."/>
            <person name="Franco L."/>
            <person name="Frontali L."/>
            <person name="Fukuhara H."/>
            <person name="Fuller L.J."/>
            <person name="Galland P."/>
            <person name="Gent M.E."/>
            <person name="Gigot D."/>
            <person name="Gilliquet V."/>
            <person name="Glansdorff N."/>
            <person name="Goffeau A."/>
            <person name="Grenson M."/>
            <person name="Grisanti P."/>
            <person name="Grivell L.A."/>
            <person name="de Haan M."/>
            <person name="Haasemann M."/>
            <person name="Hatat D."/>
            <person name="Hoenicka J."/>
            <person name="Hegemann J.H."/>
            <person name="Herbert C.J."/>
            <person name="Hilger F."/>
            <person name="Hohmann S."/>
            <person name="Hollenberg C.P."/>
            <person name="Huse K."/>
            <person name="Iborra F."/>
            <person name="Indge K.J."/>
            <person name="Isono K."/>
            <person name="Jacq C."/>
            <person name="Jacquet M."/>
            <person name="James C.M."/>
            <person name="Jauniaux J.-C."/>
            <person name="Jia Y."/>
            <person name="Jimenez A."/>
            <person name="Kelly A."/>
            <person name="Kleinhans U."/>
            <person name="Kreisl P."/>
            <person name="Lanfranchi G."/>
            <person name="Lewis C."/>
            <person name="van der Linden C.G."/>
            <person name="Lucchini G."/>
            <person name="Lutzenkirchen K."/>
            <person name="Maat M.J."/>
            <person name="Mallet L."/>
            <person name="Mannhaupt G."/>
            <person name="Martegani E."/>
            <person name="Mathieu A."/>
            <person name="Maurer C.T.C."/>
            <person name="McConnell D."/>
            <person name="McKee R.A."/>
            <person name="Messenguy F."/>
            <person name="Mewes H.-W."/>
            <person name="Molemans F."/>
            <person name="Montague M.A."/>
            <person name="Muzi Falconi M."/>
            <person name="Navas L."/>
            <person name="Newlon C.S."/>
            <person name="Noone D."/>
            <person name="Pallier C."/>
            <person name="Panzeri L."/>
            <person name="Pearson B.M."/>
            <person name="Perea J."/>
            <person name="Philippsen P."/>
            <person name="Pierard A."/>
            <person name="Planta R.J."/>
            <person name="Plevani P."/>
            <person name="Poetsch B."/>
            <person name="Pohl F.M."/>
            <person name="Purnelle B."/>
            <person name="Ramezani Rad M."/>
            <person name="Rasmussen S.W."/>
            <person name="Raynal A."/>
            <person name="Remacha M.A."/>
            <person name="Richterich P."/>
            <person name="Roberts A.B."/>
            <person name="Rodriguez F."/>
            <person name="Sanz E."/>
            <person name="Schaaff-Gerstenschlaeger I."/>
            <person name="Scherens B."/>
            <person name="Schweitzer B."/>
            <person name="Shu Y."/>
            <person name="Skala J."/>
            <person name="Slonimski P.P."/>
            <person name="Sor F."/>
            <person name="Soustelle C."/>
            <person name="Spiegelberg R."/>
            <person name="Stateva L.I."/>
            <person name="Steensma H.Y."/>
            <person name="Steiner S."/>
            <person name="Thierry A."/>
            <person name="Thireos G."/>
            <person name="Tzermia M."/>
            <person name="Urrestarazu L.A."/>
            <person name="Valle G."/>
            <person name="Vetter I."/>
            <person name="van Vliet-Reedijk J.C."/>
            <person name="Voet M."/>
            <person name="Volckaert G."/>
            <person name="Vreken P."/>
            <person name="Wang H."/>
            <person name="Warmington J.R."/>
            <person name="von Wettstein D."/>
            <person name="Wicksteed B.L."/>
            <person name="Wilson C."/>
            <person name="Wurst H."/>
            <person name="Xu G."/>
            <person name="Yoshikawa A."/>
            <person name="Zimmermann F.K."/>
            <person name="Sgouros J.G."/>
        </authorList>
    </citation>
    <scope>NUCLEOTIDE SEQUENCE [LARGE SCALE GENOMIC DNA]</scope>
    <source>
        <strain>ATCC 204508 / S288c</strain>
    </source>
</reference>
<reference key="2">
    <citation type="journal article" date="2014" name="G3 (Bethesda)">
        <title>The reference genome sequence of Saccharomyces cerevisiae: Then and now.</title>
        <authorList>
            <person name="Engel S.R."/>
            <person name="Dietrich F.S."/>
            <person name="Fisk D.G."/>
            <person name="Binkley G."/>
            <person name="Balakrishnan R."/>
            <person name="Costanzo M.C."/>
            <person name="Dwight S.S."/>
            <person name="Hitz B.C."/>
            <person name="Karra K."/>
            <person name="Nash R.S."/>
            <person name="Weng S."/>
            <person name="Wong E.D."/>
            <person name="Lloyd P."/>
            <person name="Skrzypek M.S."/>
            <person name="Miyasato S.R."/>
            <person name="Simison M."/>
            <person name="Cherry J.M."/>
        </authorList>
    </citation>
    <scope>GENOME REANNOTATION</scope>
    <source>
        <strain>ATCC 204508 / S288c</strain>
    </source>
</reference>
<reference key="3">
    <citation type="journal article" date="2007" name="Genome Res.">
        <title>Approaching a complete repository of sequence-verified protein-encoding clones for Saccharomyces cerevisiae.</title>
        <authorList>
            <person name="Hu Y."/>
            <person name="Rolfs A."/>
            <person name="Bhullar B."/>
            <person name="Murthy T.V.S."/>
            <person name="Zhu C."/>
            <person name="Berger M.F."/>
            <person name="Camargo A.A."/>
            <person name="Kelley F."/>
            <person name="McCarron S."/>
            <person name="Jepson D."/>
            <person name="Richardson A."/>
            <person name="Raphael J."/>
            <person name="Moreira D."/>
            <person name="Taycher E."/>
            <person name="Zuo D."/>
            <person name="Mohr S."/>
            <person name="Kane M.F."/>
            <person name="Williamson J."/>
            <person name="Simpson A.J.G."/>
            <person name="Bulyk M.L."/>
            <person name="Harlow E."/>
            <person name="Marsischky G."/>
            <person name="Kolodner R.D."/>
            <person name="LaBaer J."/>
        </authorList>
    </citation>
    <scope>NUCLEOTIDE SEQUENCE [GENOMIC DNA]</scope>
    <source>
        <strain>ATCC 204508 / S288c</strain>
    </source>
</reference>
<reference key="4">
    <citation type="journal article" date="1992" name="Yeast">
        <title>The complete sequence of K3B, a 7.9 kb fragment between PGK1 and CRY1 on chromosome III, reveals the presence of seven open reading frames.</title>
        <authorList>
            <person name="Bolle P.-A."/>
            <person name="Gilliquet V."/>
            <person name="Berben G."/>
            <person name="Dumont J."/>
            <person name="Hilger F."/>
        </authorList>
    </citation>
    <scope>NUCLEOTIDE SEQUENCE [GENOMIC DNA] OF 1-14</scope>
</reference>
<sequence length="114" mass="13176">MENRCSNPCYIQSDPSDLLSLRLPARFCWPFSRSSRIFQGSSRRRILSEGKNASKACFVRIFGMAKVSKAISRSRSRLLFRSLPPHPACLFEYQISSSSLFHHPFLLWQGQVFF</sequence>
<proteinExistence type="predicted"/>
<accession>P25620</accession>
<accession>A0A1S0T054</accession>
<name>YCR2_YEAST</name>
<feature type="chain" id="PRO_0000202564" description="Uncharacterized protein YCR022C">
    <location>
        <begin position="1"/>
        <end position="114"/>
    </location>
</feature>
<dbReference type="EMBL" id="X59720">
    <property type="protein sequence ID" value="CAA42314.1"/>
    <property type="molecule type" value="Genomic_DNA"/>
</dbReference>
<dbReference type="EMBL" id="AY558150">
    <property type="protein sequence ID" value="AAS56476.1"/>
    <property type="molecule type" value="Genomic_DNA"/>
</dbReference>
<dbReference type="EMBL" id="BK006937">
    <property type="protein sequence ID" value="DAA80270.1"/>
    <property type="molecule type" value="Genomic_DNA"/>
</dbReference>
<dbReference type="PIR" id="S19433">
    <property type="entry name" value="S19433"/>
</dbReference>
<dbReference type="RefSeq" id="NP_001335750.1">
    <property type="nucleotide sequence ID" value="NM_001348895.1"/>
</dbReference>
<dbReference type="DIP" id="DIP-1246N"/>
<dbReference type="FunCoup" id="P25620">
    <property type="interactions" value="22"/>
</dbReference>
<dbReference type="IntAct" id="P25620">
    <property type="interactions" value="2"/>
</dbReference>
<dbReference type="MINT" id="P25620"/>
<dbReference type="STRING" id="4932.YCR022C"/>
<dbReference type="PaxDb" id="4932-YCR022C"/>
<dbReference type="EnsemblFungi" id="YCR022C_mRNA">
    <property type="protein sequence ID" value="YCR022C"/>
    <property type="gene ID" value="YCR022C"/>
</dbReference>
<dbReference type="GeneID" id="850386"/>
<dbReference type="AGR" id="SGD:S000000616"/>
<dbReference type="SGD" id="S000000616">
    <property type="gene designation" value="YCR022C"/>
</dbReference>
<dbReference type="HOGENOM" id="CLU_2122982_0_0_1"/>
<dbReference type="InParanoid" id="P25620"/>
<dbReference type="OMA" id="PACLFEY"/>
<dbReference type="OrthoDB" id="10312177at2759"/>
<dbReference type="PRO" id="PR:P25620"/>
<dbReference type="Proteomes" id="UP000002311">
    <property type="component" value="Chromosome III"/>
</dbReference>
<dbReference type="RNAct" id="P25620">
    <property type="molecule type" value="protein"/>
</dbReference>
<organism>
    <name type="scientific">Saccharomyces cerevisiae (strain ATCC 204508 / S288c)</name>
    <name type="common">Baker's yeast</name>
    <dbReference type="NCBI Taxonomy" id="559292"/>
    <lineage>
        <taxon>Eukaryota</taxon>
        <taxon>Fungi</taxon>
        <taxon>Dikarya</taxon>
        <taxon>Ascomycota</taxon>
        <taxon>Saccharomycotina</taxon>
        <taxon>Saccharomycetes</taxon>
        <taxon>Saccharomycetales</taxon>
        <taxon>Saccharomycetaceae</taxon>
        <taxon>Saccharomyces</taxon>
    </lineage>
</organism>
<keyword id="KW-1185">Reference proteome</keyword>
<protein>
    <recommendedName>
        <fullName>Uncharacterized protein YCR022C</fullName>
    </recommendedName>
</protein>